<protein>
    <recommendedName>
        <fullName evidence="1">Large ribosomal subunit protein uL3</fullName>
    </recommendedName>
    <alternativeName>
        <fullName evidence="3">50S ribosomal protein L3</fullName>
    </alternativeName>
</protein>
<accession>Q3ZZM4</accession>
<keyword id="KW-0687">Ribonucleoprotein</keyword>
<keyword id="KW-0689">Ribosomal protein</keyword>
<keyword id="KW-0694">RNA-binding</keyword>
<keyword id="KW-0699">rRNA-binding</keyword>
<reference key="1">
    <citation type="journal article" date="2005" name="Nat. Biotechnol.">
        <title>Genome sequence of the chlorinated compound-respiring bacterium Dehalococcoides species strain CBDB1.</title>
        <authorList>
            <person name="Kube M."/>
            <person name="Beck A."/>
            <person name="Zinder S.H."/>
            <person name="Kuhl H."/>
            <person name="Reinhardt R."/>
            <person name="Adrian L."/>
        </authorList>
    </citation>
    <scope>NUCLEOTIDE SEQUENCE [LARGE SCALE GENOMIC DNA]</scope>
    <source>
        <strain>CBDB1</strain>
    </source>
</reference>
<gene>
    <name evidence="1" type="primary">rplC</name>
    <name type="ordered locus">cbdbA439</name>
</gene>
<proteinExistence type="inferred from homology"/>
<evidence type="ECO:0000255" key="1">
    <source>
        <dbReference type="HAMAP-Rule" id="MF_01325"/>
    </source>
</evidence>
<evidence type="ECO:0000256" key="2">
    <source>
        <dbReference type="SAM" id="MobiDB-lite"/>
    </source>
</evidence>
<evidence type="ECO:0000305" key="3"/>
<organism>
    <name type="scientific">Dehalococcoides mccartyi (strain CBDB1)</name>
    <dbReference type="NCBI Taxonomy" id="255470"/>
    <lineage>
        <taxon>Bacteria</taxon>
        <taxon>Bacillati</taxon>
        <taxon>Chloroflexota</taxon>
        <taxon>Dehalococcoidia</taxon>
        <taxon>Dehalococcoidales</taxon>
        <taxon>Dehalococcoidaceae</taxon>
        <taxon>Dehalococcoides</taxon>
    </lineage>
</organism>
<dbReference type="EMBL" id="AJ965256">
    <property type="protein sequence ID" value="CAI82639.1"/>
    <property type="molecule type" value="Genomic_DNA"/>
</dbReference>
<dbReference type="RefSeq" id="WP_011308996.1">
    <property type="nucleotide sequence ID" value="NC_007356.1"/>
</dbReference>
<dbReference type="SMR" id="Q3ZZM4"/>
<dbReference type="KEGG" id="deh:cbdbA439"/>
<dbReference type="HOGENOM" id="CLU_044142_4_1_0"/>
<dbReference type="Proteomes" id="UP000000433">
    <property type="component" value="Chromosome"/>
</dbReference>
<dbReference type="GO" id="GO:0022625">
    <property type="term" value="C:cytosolic large ribosomal subunit"/>
    <property type="evidence" value="ECO:0007669"/>
    <property type="project" value="TreeGrafter"/>
</dbReference>
<dbReference type="GO" id="GO:0019843">
    <property type="term" value="F:rRNA binding"/>
    <property type="evidence" value="ECO:0007669"/>
    <property type="project" value="UniProtKB-UniRule"/>
</dbReference>
<dbReference type="GO" id="GO:0003735">
    <property type="term" value="F:structural constituent of ribosome"/>
    <property type="evidence" value="ECO:0007669"/>
    <property type="project" value="InterPro"/>
</dbReference>
<dbReference type="GO" id="GO:0006412">
    <property type="term" value="P:translation"/>
    <property type="evidence" value="ECO:0007669"/>
    <property type="project" value="UniProtKB-UniRule"/>
</dbReference>
<dbReference type="FunFam" id="2.40.30.10:FF:000004">
    <property type="entry name" value="50S ribosomal protein L3"/>
    <property type="match status" value="1"/>
</dbReference>
<dbReference type="Gene3D" id="2.40.30.10">
    <property type="entry name" value="Translation factors"/>
    <property type="match status" value="2"/>
</dbReference>
<dbReference type="HAMAP" id="MF_01325_B">
    <property type="entry name" value="Ribosomal_uL3_B"/>
    <property type="match status" value="1"/>
</dbReference>
<dbReference type="InterPro" id="IPR000597">
    <property type="entry name" value="Ribosomal_uL3"/>
</dbReference>
<dbReference type="InterPro" id="IPR019927">
    <property type="entry name" value="Ribosomal_uL3_bac/org-type"/>
</dbReference>
<dbReference type="InterPro" id="IPR019926">
    <property type="entry name" value="Ribosomal_uL3_CS"/>
</dbReference>
<dbReference type="InterPro" id="IPR009000">
    <property type="entry name" value="Transl_B-barrel_sf"/>
</dbReference>
<dbReference type="NCBIfam" id="TIGR03625">
    <property type="entry name" value="L3_bact"/>
    <property type="match status" value="1"/>
</dbReference>
<dbReference type="PANTHER" id="PTHR11229">
    <property type="entry name" value="50S RIBOSOMAL PROTEIN L3"/>
    <property type="match status" value="1"/>
</dbReference>
<dbReference type="PANTHER" id="PTHR11229:SF16">
    <property type="entry name" value="LARGE RIBOSOMAL SUBUNIT PROTEIN UL3C"/>
    <property type="match status" value="1"/>
</dbReference>
<dbReference type="Pfam" id="PF00297">
    <property type="entry name" value="Ribosomal_L3"/>
    <property type="match status" value="1"/>
</dbReference>
<dbReference type="SUPFAM" id="SSF50447">
    <property type="entry name" value="Translation proteins"/>
    <property type="match status" value="1"/>
</dbReference>
<dbReference type="PROSITE" id="PS00474">
    <property type="entry name" value="RIBOSOMAL_L3"/>
    <property type="match status" value="1"/>
</dbReference>
<sequence>MIQGIIGKKIGMTQIFQEDGKAQPVTLVEAGPCVVVQVKTEKQDGYEAVQLGYGKAKHITSAVKGQCRGFGEFKVLREVDVDDIAAVSVGDQITVSDFKDGEKIDASGVSRGRGFSGVVKRWHFAGGPKTHGQSDRHRAPGSIGSTTTPGRIYKGKHMAGHMGNEAVTIRNLVVLKTDAEKNLLMVKGAIPGGKNTIILIKKTGK</sequence>
<comment type="function">
    <text evidence="1">One of the primary rRNA binding proteins, it binds directly near the 3'-end of the 23S rRNA, where it nucleates assembly of the 50S subunit.</text>
</comment>
<comment type="subunit">
    <text evidence="1">Part of the 50S ribosomal subunit. Forms a cluster with proteins L14 and L19.</text>
</comment>
<comment type="similarity">
    <text evidence="1">Belongs to the universal ribosomal protein uL3 family.</text>
</comment>
<name>RL3_DEHMC</name>
<feature type="chain" id="PRO_0000241339" description="Large ribosomal subunit protein uL3">
    <location>
        <begin position="1"/>
        <end position="205"/>
    </location>
</feature>
<feature type="region of interest" description="Disordered" evidence="2">
    <location>
        <begin position="126"/>
        <end position="150"/>
    </location>
</feature>